<evidence type="ECO:0000250" key="1"/>
<evidence type="ECO:0000305" key="2"/>
<protein>
    <recommendedName>
        <fullName>Uncharacterized protein YieK</fullName>
    </recommendedName>
</protein>
<organism>
    <name type="scientific">Escherichia coli (strain K12)</name>
    <dbReference type="NCBI Taxonomy" id="83333"/>
    <lineage>
        <taxon>Bacteria</taxon>
        <taxon>Pseudomonadati</taxon>
        <taxon>Pseudomonadota</taxon>
        <taxon>Gammaproteobacteria</taxon>
        <taxon>Enterobacterales</taxon>
        <taxon>Enterobacteriaceae</taxon>
        <taxon>Escherichia</taxon>
    </lineage>
</organism>
<name>YIEK_ECOLI</name>
<feature type="chain" id="PRO_0000160191" description="Uncharacterized protein YieK">
    <location>
        <begin position="1"/>
        <end position="240"/>
    </location>
</feature>
<feature type="active site" description="Proton acceptor" evidence="1">
    <location>
        <position position="66"/>
    </location>
</feature>
<feature type="active site" evidence="1">
    <location>
        <position position="129"/>
    </location>
</feature>
<feature type="active site" description="Proton acceptor" evidence="1">
    <location>
        <position position="131"/>
    </location>
</feature>
<feature type="sequence conflict" description="In Ref. 1; AAA62069." evidence="2" ref="1">
    <original>AAAELALG</original>
    <variation>VPQN</variation>
    <location>
        <begin position="233"/>
        <end position="240"/>
    </location>
</feature>
<gene>
    <name type="primary">yieK</name>
    <name type="ordered locus">b3718</name>
    <name type="ordered locus">JW5613</name>
</gene>
<dbReference type="EMBL" id="L10328">
    <property type="protein sequence ID" value="AAA62069.1"/>
    <property type="status" value="ALT_FRAME"/>
    <property type="molecule type" value="Genomic_DNA"/>
</dbReference>
<dbReference type="EMBL" id="U00096">
    <property type="protein sequence ID" value="AAT48202.1"/>
    <property type="molecule type" value="Genomic_DNA"/>
</dbReference>
<dbReference type="EMBL" id="AP009048">
    <property type="protein sequence ID" value="BAE77570.1"/>
    <property type="molecule type" value="Genomic_DNA"/>
</dbReference>
<dbReference type="RefSeq" id="WP_000766900.1">
    <property type="nucleotide sequence ID" value="NZ_STEB01000015.1"/>
</dbReference>
<dbReference type="RefSeq" id="YP_026242.1">
    <property type="nucleotide sequence ID" value="NC_000913.3"/>
</dbReference>
<dbReference type="SMR" id="P31470"/>
<dbReference type="BioGRID" id="4263200">
    <property type="interactions" value="4"/>
</dbReference>
<dbReference type="FunCoup" id="P31470">
    <property type="interactions" value="273"/>
</dbReference>
<dbReference type="STRING" id="511145.b3718"/>
<dbReference type="PaxDb" id="511145-b3718"/>
<dbReference type="EnsemblBacteria" id="AAT48202">
    <property type="protein sequence ID" value="AAT48202"/>
    <property type="gene ID" value="b3718"/>
</dbReference>
<dbReference type="GeneID" id="948229"/>
<dbReference type="KEGG" id="ecj:JW5613"/>
<dbReference type="KEGG" id="eco:b3718"/>
<dbReference type="KEGG" id="ecoc:C3026_20155"/>
<dbReference type="PATRIC" id="fig|1411691.4.peg.2983"/>
<dbReference type="EchoBASE" id="EB1679"/>
<dbReference type="eggNOG" id="COG0363">
    <property type="taxonomic scope" value="Bacteria"/>
</dbReference>
<dbReference type="HOGENOM" id="CLU_049611_1_1_6"/>
<dbReference type="InParanoid" id="P31470"/>
<dbReference type="OMA" id="YQDKKVH"/>
<dbReference type="OrthoDB" id="9810967at2"/>
<dbReference type="PhylomeDB" id="P31470"/>
<dbReference type="BioCyc" id="EcoCyc:EG11728-MONOMER"/>
<dbReference type="PRO" id="PR:P31470"/>
<dbReference type="Proteomes" id="UP000000625">
    <property type="component" value="Chromosome"/>
</dbReference>
<dbReference type="GO" id="GO:0005737">
    <property type="term" value="C:cytoplasm"/>
    <property type="evidence" value="ECO:0000318"/>
    <property type="project" value="GO_Central"/>
</dbReference>
<dbReference type="GO" id="GO:0005829">
    <property type="term" value="C:cytosol"/>
    <property type="evidence" value="ECO:0000318"/>
    <property type="project" value="GO_Central"/>
</dbReference>
<dbReference type="GO" id="GO:0004342">
    <property type="term" value="F:glucosamine-6-phosphate deaminase activity"/>
    <property type="evidence" value="ECO:0000318"/>
    <property type="project" value="GO_Central"/>
</dbReference>
<dbReference type="GO" id="GO:0042802">
    <property type="term" value="F:identical protein binding"/>
    <property type="evidence" value="ECO:0000318"/>
    <property type="project" value="GO_Central"/>
</dbReference>
<dbReference type="GO" id="GO:0005975">
    <property type="term" value="P:carbohydrate metabolic process"/>
    <property type="evidence" value="ECO:0007669"/>
    <property type="project" value="InterPro"/>
</dbReference>
<dbReference type="GO" id="GO:0006043">
    <property type="term" value="P:glucosamine catabolic process"/>
    <property type="evidence" value="ECO:0000318"/>
    <property type="project" value="GO_Central"/>
</dbReference>
<dbReference type="GO" id="GO:0006046">
    <property type="term" value="P:N-acetylglucosamine catabolic process"/>
    <property type="evidence" value="ECO:0000318"/>
    <property type="project" value="GO_Central"/>
</dbReference>
<dbReference type="GO" id="GO:0019262">
    <property type="term" value="P:N-acetylneuraminate catabolic process"/>
    <property type="evidence" value="ECO:0000318"/>
    <property type="project" value="GO_Central"/>
</dbReference>
<dbReference type="CDD" id="cd01399">
    <property type="entry name" value="GlcN6P_deaminase"/>
    <property type="match status" value="1"/>
</dbReference>
<dbReference type="Gene3D" id="3.40.50.1360">
    <property type="match status" value="1"/>
</dbReference>
<dbReference type="InterPro" id="IPR006148">
    <property type="entry name" value="Glc/Gal-6P_isomerase"/>
</dbReference>
<dbReference type="InterPro" id="IPR052960">
    <property type="entry name" value="GlcN6P_deaminase-like"/>
</dbReference>
<dbReference type="InterPro" id="IPR004547">
    <property type="entry name" value="Glucosamine6P_isomerase"/>
</dbReference>
<dbReference type="InterPro" id="IPR018321">
    <property type="entry name" value="Glucosamine6P_isomerase_CS"/>
</dbReference>
<dbReference type="InterPro" id="IPR037171">
    <property type="entry name" value="NagB/RpiA_transferase-like"/>
</dbReference>
<dbReference type="NCBIfam" id="NF009022">
    <property type="entry name" value="PRK12358.1"/>
    <property type="match status" value="1"/>
</dbReference>
<dbReference type="PANTHER" id="PTHR42892">
    <property type="entry name" value="GLUCOSAMINE-6-PHOSPHATE DEAMINASE-LIKE PROTEIN BT_0258-RELATED"/>
    <property type="match status" value="1"/>
</dbReference>
<dbReference type="PANTHER" id="PTHR42892:SF1">
    <property type="entry name" value="GLUCOSAMINE-6-PHOSPHATE ISOMERASE"/>
    <property type="match status" value="1"/>
</dbReference>
<dbReference type="Pfam" id="PF01182">
    <property type="entry name" value="Glucosamine_iso"/>
    <property type="match status" value="1"/>
</dbReference>
<dbReference type="SUPFAM" id="SSF100950">
    <property type="entry name" value="NagB/RpiA/CoA transferase-like"/>
    <property type="match status" value="1"/>
</dbReference>
<dbReference type="PROSITE" id="PS01161">
    <property type="entry name" value="GLC_GALNAC_ISOMERASE"/>
    <property type="match status" value="1"/>
</dbReference>
<accession>P31470</accession>
<accession>Q2M836</accession>
<accession>Q6BF12</accession>
<keyword id="KW-1185">Reference proteome</keyword>
<comment type="similarity">
    <text evidence="2">Belongs to the glucosamine/galactosamine-6-phosphate isomerase family.</text>
</comment>
<comment type="sequence caution" evidence="2">
    <conflict type="frameshift">
        <sequence resource="EMBL-CDS" id="AAA62069"/>
    </conflict>
</comment>
<sequence length="240" mass="26279">MKLIITEDYQEMSRVAAHHLLGYMSKTRRVNLAITAGSTPKGMYEYLTTLVKGKPWYDNCYFYNFDEIPFRGKEGEGVTITNLRNLFFTPAGIKEENIQKLTIDNYREHDQKLAREGGLDLVVLGLGADGHFCGNLPNTTHFHEQTVEFPIQGEMVDIVAHGELGGDFSLVPDSYVTMGPKSIMAAKNLLIIVSGAGKAQALKNVLQGPVTEDVPASVLQLHPSLMVIADKAAAAELALG</sequence>
<proteinExistence type="inferred from homology"/>
<reference key="1">
    <citation type="journal article" date="1993" name="Genomics">
        <title>DNA sequence and analysis of 136 kilobases of the Escherichia coli genome: organizational symmetry around the origin of replication.</title>
        <authorList>
            <person name="Burland V.D."/>
            <person name="Plunkett G. III"/>
            <person name="Daniels D.L."/>
            <person name="Blattner F.R."/>
        </authorList>
    </citation>
    <scope>NUCLEOTIDE SEQUENCE [LARGE SCALE GENOMIC DNA]</scope>
    <source>
        <strain>K12 / MG1655 / ATCC 47076</strain>
    </source>
</reference>
<reference key="2">
    <citation type="journal article" date="1997" name="Science">
        <title>The complete genome sequence of Escherichia coli K-12.</title>
        <authorList>
            <person name="Blattner F.R."/>
            <person name="Plunkett G. III"/>
            <person name="Bloch C.A."/>
            <person name="Perna N.T."/>
            <person name="Burland V."/>
            <person name="Riley M."/>
            <person name="Collado-Vides J."/>
            <person name="Glasner J.D."/>
            <person name="Rode C.K."/>
            <person name="Mayhew G.F."/>
            <person name="Gregor J."/>
            <person name="Davis N.W."/>
            <person name="Kirkpatrick H.A."/>
            <person name="Goeden M.A."/>
            <person name="Rose D.J."/>
            <person name="Mau B."/>
            <person name="Shao Y."/>
        </authorList>
    </citation>
    <scope>NUCLEOTIDE SEQUENCE [LARGE SCALE GENOMIC DNA]</scope>
    <scope>SEQUENCE REVISION TO N-TERMINUS</scope>
    <source>
        <strain>K12 / MG1655 / ATCC 47076</strain>
    </source>
</reference>
<reference key="3">
    <citation type="journal article" date="2006" name="Nucleic Acids Res.">
        <title>Escherichia coli K-12: a cooperatively developed annotation snapshot -- 2005.</title>
        <authorList>
            <person name="Riley M."/>
            <person name="Abe T."/>
            <person name="Arnaud M.B."/>
            <person name="Berlyn M.K.B."/>
            <person name="Blattner F.R."/>
            <person name="Chaudhuri R.R."/>
            <person name="Glasner J.D."/>
            <person name="Horiuchi T."/>
            <person name="Keseler I.M."/>
            <person name="Kosuge T."/>
            <person name="Mori H."/>
            <person name="Perna N.T."/>
            <person name="Plunkett G. III"/>
            <person name="Rudd K.E."/>
            <person name="Serres M.H."/>
            <person name="Thomas G.H."/>
            <person name="Thomson N.R."/>
            <person name="Wishart D."/>
            <person name="Wanner B.L."/>
        </authorList>
    </citation>
    <scope>SEQUENCE REVISION</scope>
</reference>
<reference key="4">
    <citation type="journal article" date="2006" name="Mol. Syst. Biol.">
        <title>Highly accurate genome sequences of Escherichia coli K-12 strains MG1655 and W3110.</title>
        <authorList>
            <person name="Hayashi K."/>
            <person name="Morooka N."/>
            <person name="Yamamoto Y."/>
            <person name="Fujita K."/>
            <person name="Isono K."/>
            <person name="Choi S."/>
            <person name="Ohtsubo E."/>
            <person name="Baba T."/>
            <person name="Wanner B.L."/>
            <person name="Mori H."/>
            <person name="Horiuchi T."/>
        </authorList>
    </citation>
    <scope>NUCLEOTIDE SEQUENCE [LARGE SCALE GENOMIC DNA]</scope>
    <source>
        <strain>K12 / W3110 / ATCC 27325 / DSM 5911</strain>
    </source>
</reference>